<name>ATPB_SALG2</name>
<sequence length="460" mass="50214">MATGKIVQVIGAVVDVEFPQDAVPRVYDALEVQNGNEKLVLEVQQQLGGGIVRTIAMGSSDGLSRGLDVKDLEHPIEVPVGKATLGRIMNVLGEPVDMKGEIGEEERWAIHRAAPSYEELSNSQELLETGIKVIDLMCPFAKGGKVGLFGGAGVGKTVNMMELIRNIAIEHSGYSVFAGVGERTREGNDFYHEMTDSNVIDKVSLVYGQMNEPPGNRLRVALTGLTMAEKFRDEGRDVLLFVDNIYRYTLAGTEVSALLGRMPSAVGYQPTLAEEMGVLQERITSTKTGSITSVQAVYVPADDLTDPSPATTFAHLDATVVLSRQIASLGIYPAVDPLDSTSRQLDPLVVGQEHYDTARGVQSILQRYQELKDIIAILGMDELSEEDKLVVARARKIQRFLSQPFFVAEVFTGSPGKYVSLKDTIRGFKGIMEGEYDHLPEQAFYMVGSIDEAVEKAKKL</sequence>
<keyword id="KW-0066">ATP synthesis</keyword>
<keyword id="KW-0067">ATP-binding</keyword>
<keyword id="KW-0997">Cell inner membrane</keyword>
<keyword id="KW-1003">Cell membrane</keyword>
<keyword id="KW-0139">CF(1)</keyword>
<keyword id="KW-0375">Hydrogen ion transport</keyword>
<keyword id="KW-0406">Ion transport</keyword>
<keyword id="KW-0472">Membrane</keyword>
<keyword id="KW-0547">Nucleotide-binding</keyword>
<keyword id="KW-1278">Translocase</keyword>
<keyword id="KW-0813">Transport</keyword>
<protein>
    <recommendedName>
        <fullName evidence="1">ATP synthase subunit beta</fullName>
        <ecNumber evidence="1">7.1.2.2</ecNumber>
    </recommendedName>
    <alternativeName>
        <fullName evidence="1">ATP synthase F1 sector subunit beta</fullName>
    </alternativeName>
    <alternativeName>
        <fullName evidence="1">F-ATPase subunit beta</fullName>
    </alternativeName>
</protein>
<proteinExistence type="inferred from homology"/>
<reference key="1">
    <citation type="journal article" date="2008" name="Genome Res.">
        <title>Comparative genome analysis of Salmonella enteritidis PT4 and Salmonella gallinarum 287/91 provides insights into evolutionary and host adaptation pathways.</title>
        <authorList>
            <person name="Thomson N.R."/>
            <person name="Clayton D.J."/>
            <person name="Windhorst D."/>
            <person name="Vernikos G."/>
            <person name="Davidson S."/>
            <person name="Churcher C."/>
            <person name="Quail M.A."/>
            <person name="Stevens M."/>
            <person name="Jones M.A."/>
            <person name="Watson M."/>
            <person name="Barron A."/>
            <person name="Layton A."/>
            <person name="Pickard D."/>
            <person name="Kingsley R.A."/>
            <person name="Bignell A."/>
            <person name="Clark L."/>
            <person name="Harris B."/>
            <person name="Ormond D."/>
            <person name="Abdellah Z."/>
            <person name="Brooks K."/>
            <person name="Cherevach I."/>
            <person name="Chillingworth T."/>
            <person name="Woodward J."/>
            <person name="Norberczak H."/>
            <person name="Lord A."/>
            <person name="Arrowsmith C."/>
            <person name="Jagels K."/>
            <person name="Moule S."/>
            <person name="Mungall K."/>
            <person name="Saunders M."/>
            <person name="Whitehead S."/>
            <person name="Chabalgoity J.A."/>
            <person name="Maskell D."/>
            <person name="Humphreys T."/>
            <person name="Roberts M."/>
            <person name="Barrow P.A."/>
            <person name="Dougan G."/>
            <person name="Parkhill J."/>
        </authorList>
    </citation>
    <scope>NUCLEOTIDE SEQUENCE [LARGE SCALE GENOMIC DNA]</scope>
    <source>
        <strain>287/91 / NCTC 13346</strain>
    </source>
</reference>
<feature type="chain" id="PRO_1000143540" description="ATP synthase subunit beta">
    <location>
        <begin position="1"/>
        <end position="460"/>
    </location>
</feature>
<feature type="binding site" evidence="1">
    <location>
        <begin position="150"/>
        <end position="157"/>
    </location>
    <ligand>
        <name>ATP</name>
        <dbReference type="ChEBI" id="CHEBI:30616"/>
    </ligand>
</feature>
<comment type="function">
    <text evidence="1">Produces ATP from ADP in the presence of a proton gradient across the membrane. The catalytic sites are hosted primarily by the beta subunits.</text>
</comment>
<comment type="catalytic activity">
    <reaction evidence="1">
        <text>ATP + H2O + 4 H(+)(in) = ADP + phosphate + 5 H(+)(out)</text>
        <dbReference type="Rhea" id="RHEA:57720"/>
        <dbReference type="ChEBI" id="CHEBI:15377"/>
        <dbReference type="ChEBI" id="CHEBI:15378"/>
        <dbReference type="ChEBI" id="CHEBI:30616"/>
        <dbReference type="ChEBI" id="CHEBI:43474"/>
        <dbReference type="ChEBI" id="CHEBI:456216"/>
        <dbReference type="EC" id="7.1.2.2"/>
    </reaction>
</comment>
<comment type="subunit">
    <text evidence="1">F-type ATPases have 2 components, CF(1) - the catalytic core - and CF(0) - the membrane proton channel. CF(1) has five subunits: alpha(3), beta(3), gamma(1), delta(1), epsilon(1). CF(0) has three main subunits: a(1), b(2) and c(9-12). The alpha and beta chains form an alternating ring which encloses part of the gamma chain. CF(1) is attached to CF(0) by a central stalk formed by the gamma and epsilon chains, while a peripheral stalk is formed by the delta and b chains.</text>
</comment>
<comment type="subcellular location">
    <subcellularLocation>
        <location evidence="1">Cell inner membrane</location>
        <topology evidence="1">Peripheral membrane protein</topology>
    </subcellularLocation>
</comment>
<comment type="similarity">
    <text evidence="1">Belongs to the ATPase alpha/beta chains family.</text>
</comment>
<gene>
    <name evidence="1" type="primary">atpD</name>
    <name type="ordered locus">SG3568</name>
</gene>
<accession>B5RFW3</accession>
<dbReference type="EC" id="7.1.2.2" evidence="1"/>
<dbReference type="EMBL" id="AM933173">
    <property type="protein sequence ID" value="CAR39357.1"/>
    <property type="molecule type" value="Genomic_DNA"/>
</dbReference>
<dbReference type="RefSeq" id="WP_000190500.1">
    <property type="nucleotide sequence ID" value="NC_011274.1"/>
</dbReference>
<dbReference type="SMR" id="B5RFW3"/>
<dbReference type="KEGG" id="seg:SG3568"/>
<dbReference type="HOGENOM" id="CLU_022398_0_2_6"/>
<dbReference type="Proteomes" id="UP000008321">
    <property type="component" value="Chromosome"/>
</dbReference>
<dbReference type="GO" id="GO:0005886">
    <property type="term" value="C:plasma membrane"/>
    <property type="evidence" value="ECO:0007669"/>
    <property type="project" value="UniProtKB-SubCell"/>
</dbReference>
<dbReference type="GO" id="GO:0045259">
    <property type="term" value="C:proton-transporting ATP synthase complex"/>
    <property type="evidence" value="ECO:0007669"/>
    <property type="project" value="UniProtKB-KW"/>
</dbReference>
<dbReference type="GO" id="GO:0005524">
    <property type="term" value="F:ATP binding"/>
    <property type="evidence" value="ECO:0007669"/>
    <property type="project" value="UniProtKB-UniRule"/>
</dbReference>
<dbReference type="GO" id="GO:0016887">
    <property type="term" value="F:ATP hydrolysis activity"/>
    <property type="evidence" value="ECO:0007669"/>
    <property type="project" value="InterPro"/>
</dbReference>
<dbReference type="GO" id="GO:0046933">
    <property type="term" value="F:proton-transporting ATP synthase activity, rotational mechanism"/>
    <property type="evidence" value="ECO:0007669"/>
    <property type="project" value="UniProtKB-UniRule"/>
</dbReference>
<dbReference type="CDD" id="cd18110">
    <property type="entry name" value="ATP-synt_F1_beta_C"/>
    <property type="match status" value="1"/>
</dbReference>
<dbReference type="CDD" id="cd18115">
    <property type="entry name" value="ATP-synt_F1_beta_N"/>
    <property type="match status" value="1"/>
</dbReference>
<dbReference type="CDD" id="cd01133">
    <property type="entry name" value="F1-ATPase_beta_CD"/>
    <property type="match status" value="1"/>
</dbReference>
<dbReference type="FunFam" id="1.10.1140.10:FF:000001">
    <property type="entry name" value="ATP synthase subunit beta"/>
    <property type="match status" value="1"/>
</dbReference>
<dbReference type="FunFam" id="2.40.10.170:FF:000003">
    <property type="entry name" value="ATP synthase subunit beta"/>
    <property type="match status" value="1"/>
</dbReference>
<dbReference type="FunFam" id="3.40.50.300:FF:000004">
    <property type="entry name" value="ATP synthase subunit beta"/>
    <property type="match status" value="1"/>
</dbReference>
<dbReference type="Gene3D" id="2.40.10.170">
    <property type="match status" value="1"/>
</dbReference>
<dbReference type="Gene3D" id="1.10.1140.10">
    <property type="entry name" value="Bovine Mitochondrial F1-atpase, Atp Synthase Beta Chain, Chain D, domain 3"/>
    <property type="match status" value="1"/>
</dbReference>
<dbReference type="Gene3D" id="3.40.50.300">
    <property type="entry name" value="P-loop containing nucleotide triphosphate hydrolases"/>
    <property type="match status" value="1"/>
</dbReference>
<dbReference type="HAMAP" id="MF_01347">
    <property type="entry name" value="ATP_synth_beta_bact"/>
    <property type="match status" value="1"/>
</dbReference>
<dbReference type="InterPro" id="IPR003593">
    <property type="entry name" value="AAA+_ATPase"/>
</dbReference>
<dbReference type="InterPro" id="IPR055190">
    <property type="entry name" value="ATP-synt_VA_C"/>
</dbReference>
<dbReference type="InterPro" id="IPR005722">
    <property type="entry name" value="ATP_synth_F1_bsu"/>
</dbReference>
<dbReference type="InterPro" id="IPR020003">
    <property type="entry name" value="ATPase_a/bsu_AS"/>
</dbReference>
<dbReference type="InterPro" id="IPR050053">
    <property type="entry name" value="ATPase_alpha/beta_chains"/>
</dbReference>
<dbReference type="InterPro" id="IPR004100">
    <property type="entry name" value="ATPase_F1/V1/A1_a/bsu_N"/>
</dbReference>
<dbReference type="InterPro" id="IPR036121">
    <property type="entry name" value="ATPase_F1/V1/A1_a/bsu_N_sf"/>
</dbReference>
<dbReference type="InterPro" id="IPR000194">
    <property type="entry name" value="ATPase_F1/V1/A1_a/bsu_nucl-bd"/>
</dbReference>
<dbReference type="InterPro" id="IPR024034">
    <property type="entry name" value="ATPase_F1/V1_b/a_C"/>
</dbReference>
<dbReference type="InterPro" id="IPR027417">
    <property type="entry name" value="P-loop_NTPase"/>
</dbReference>
<dbReference type="NCBIfam" id="TIGR01039">
    <property type="entry name" value="atpD"/>
    <property type="match status" value="1"/>
</dbReference>
<dbReference type="PANTHER" id="PTHR15184">
    <property type="entry name" value="ATP SYNTHASE"/>
    <property type="match status" value="1"/>
</dbReference>
<dbReference type="PANTHER" id="PTHR15184:SF71">
    <property type="entry name" value="ATP SYNTHASE SUBUNIT BETA, MITOCHONDRIAL"/>
    <property type="match status" value="1"/>
</dbReference>
<dbReference type="Pfam" id="PF00006">
    <property type="entry name" value="ATP-synt_ab"/>
    <property type="match status" value="1"/>
</dbReference>
<dbReference type="Pfam" id="PF02874">
    <property type="entry name" value="ATP-synt_ab_N"/>
    <property type="match status" value="1"/>
</dbReference>
<dbReference type="Pfam" id="PF22919">
    <property type="entry name" value="ATP-synt_VA_C"/>
    <property type="match status" value="1"/>
</dbReference>
<dbReference type="SMART" id="SM00382">
    <property type="entry name" value="AAA"/>
    <property type="match status" value="1"/>
</dbReference>
<dbReference type="SUPFAM" id="SSF47917">
    <property type="entry name" value="C-terminal domain of alpha and beta subunits of F1 ATP synthase"/>
    <property type="match status" value="1"/>
</dbReference>
<dbReference type="SUPFAM" id="SSF50615">
    <property type="entry name" value="N-terminal domain of alpha and beta subunits of F1 ATP synthase"/>
    <property type="match status" value="1"/>
</dbReference>
<dbReference type="SUPFAM" id="SSF52540">
    <property type="entry name" value="P-loop containing nucleoside triphosphate hydrolases"/>
    <property type="match status" value="1"/>
</dbReference>
<dbReference type="PROSITE" id="PS00152">
    <property type="entry name" value="ATPASE_ALPHA_BETA"/>
    <property type="match status" value="1"/>
</dbReference>
<organism>
    <name type="scientific">Salmonella gallinarum (strain 287/91 / NCTC 13346)</name>
    <dbReference type="NCBI Taxonomy" id="550538"/>
    <lineage>
        <taxon>Bacteria</taxon>
        <taxon>Pseudomonadati</taxon>
        <taxon>Pseudomonadota</taxon>
        <taxon>Gammaproteobacteria</taxon>
        <taxon>Enterobacterales</taxon>
        <taxon>Enterobacteriaceae</taxon>
        <taxon>Salmonella</taxon>
    </lineage>
</organism>
<evidence type="ECO:0000255" key="1">
    <source>
        <dbReference type="HAMAP-Rule" id="MF_01347"/>
    </source>
</evidence>